<organism>
    <name type="scientific">Pyrobaculum calidifontis (strain DSM 21063 / JCM 11548 / VA1)</name>
    <dbReference type="NCBI Taxonomy" id="410359"/>
    <lineage>
        <taxon>Archaea</taxon>
        <taxon>Thermoproteota</taxon>
        <taxon>Thermoprotei</taxon>
        <taxon>Thermoproteales</taxon>
        <taxon>Thermoproteaceae</taxon>
        <taxon>Pyrobaculum</taxon>
    </lineage>
</organism>
<comment type="function">
    <text evidence="1">This protein binds specifically to 23S rRNA. It makes multiple contacts with different domains of the 23S rRNA in the assembled 50S subunit and ribosome.</text>
</comment>
<comment type="function">
    <text evidence="1">The globular domain of the protein is located near the polypeptide exit tunnel on the outside of the subunit, while an extended beta-hairpin is found that lines the wall of the exit tunnel in the center of the 70S ribosome.</text>
</comment>
<comment type="subunit">
    <text evidence="1">Part of the 50S ribosomal subunit.</text>
</comment>
<comment type="similarity">
    <text evidence="1">Belongs to the universal ribosomal protein uL22 family.</text>
</comment>
<comment type="sequence caution" evidence="2">
    <conflict type="erroneous initiation">
        <sequence resource="EMBL-CDS" id="ABO07983"/>
    </conflict>
    <text>Truncated N-terminus.</text>
</comment>
<evidence type="ECO:0000255" key="1">
    <source>
        <dbReference type="HAMAP-Rule" id="MF_01331"/>
    </source>
</evidence>
<evidence type="ECO:0000305" key="2"/>
<sequence>MPHFHYSLTDEQAAELVFKKYGVRITPEQIAKAYAPEQRMSWKKSVEVARFIKGMTLKQAKAWLEDVVKLKRPIPIKTFKKKQAHHATPWEGWPVAKWPVKVAKRYLQLLENLENNAKFKGLDVERLVIIHAAAHKGIKIPNIMPRAFGRATPFNEETVNVEIVAAELPKEVVPKRYKLNLVKR</sequence>
<dbReference type="EMBL" id="CP000561">
    <property type="protein sequence ID" value="ABO07983.1"/>
    <property type="status" value="ALT_INIT"/>
    <property type="molecule type" value="Genomic_DNA"/>
</dbReference>
<dbReference type="RefSeq" id="WP_193322855.1">
    <property type="nucleotide sequence ID" value="NC_009073.1"/>
</dbReference>
<dbReference type="PDB" id="9E6Q">
    <property type="method" value="EM"/>
    <property type="resolution" value="1.95 A"/>
    <property type="chains" value="AT=1-184"/>
</dbReference>
<dbReference type="PDB" id="9E71">
    <property type="method" value="EM"/>
    <property type="resolution" value="2.36 A"/>
    <property type="chains" value="AT=1-184"/>
</dbReference>
<dbReference type="PDB" id="9E7F">
    <property type="method" value="EM"/>
    <property type="resolution" value="2.53 A"/>
    <property type="chains" value="AT=1-184"/>
</dbReference>
<dbReference type="PDBsum" id="9E6Q"/>
<dbReference type="PDBsum" id="9E71"/>
<dbReference type="PDBsum" id="9E7F"/>
<dbReference type="EMDB" id="EMD-47578"/>
<dbReference type="EMDB" id="EMD-47628"/>
<dbReference type="EMDB" id="EMD-47668"/>
<dbReference type="SMR" id="A3MTL6"/>
<dbReference type="STRING" id="410359.Pcal_0556"/>
<dbReference type="GeneID" id="4908983"/>
<dbReference type="KEGG" id="pcl:Pcal_0556"/>
<dbReference type="eggNOG" id="arCOG04098">
    <property type="taxonomic scope" value="Archaea"/>
</dbReference>
<dbReference type="HOGENOM" id="CLU_083987_0_2_2"/>
<dbReference type="OrthoDB" id="314984at2157"/>
<dbReference type="Proteomes" id="UP000001431">
    <property type="component" value="Chromosome"/>
</dbReference>
<dbReference type="GO" id="GO:0022625">
    <property type="term" value="C:cytosolic large ribosomal subunit"/>
    <property type="evidence" value="ECO:0007669"/>
    <property type="project" value="TreeGrafter"/>
</dbReference>
<dbReference type="GO" id="GO:0019843">
    <property type="term" value="F:rRNA binding"/>
    <property type="evidence" value="ECO:0007669"/>
    <property type="project" value="UniProtKB-UniRule"/>
</dbReference>
<dbReference type="GO" id="GO:0003735">
    <property type="term" value="F:structural constituent of ribosome"/>
    <property type="evidence" value="ECO:0007669"/>
    <property type="project" value="InterPro"/>
</dbReference>
<dbReference type="GO" id="GO:0002181">
    <property type="term" value="P:cytoplasmic translation"/>
    <property type="evidence" value="ECO:0007669"/>
    <property type="project" value="TreeGrafter"/>
</dbReference>
<dbReference type="CDD" id="cd00336">
    <property type="entry name" value="Ribosomal_L22"/>
    <property type="match status" value="1"/>
</dbReference>
<dbReference type="Gene3D" id="3.90.470.10">
    <property type="entry name" value="Ribosomal protein L22/L17"/>
    <property type="match status" value="1"/>
</dbReference>
<dbReference type="HAMAP" id="MF_01331_A">
    <property type="entry name" value="Ribosomal_uL22_A"/>
    <property type="match status" value="1"/>
</dbReference>
<dbReference type="InterPro" id="IPR001063">
    <property type="entry name" value="Ribosomal_uL22"/>
</dbReference>
<dbReference type="InterPro" id="IPR005721">
    <property type="entry name" value="Ribosomal_uL22_euk/arc"/>
</dbReference>
<dbReference type="InterPro" id="IPR036394">
    <property type="entry name" value="Ribosomal_uL22_sf"/>
</dbReference>
<dbReference type="NCBIfam" id="NF003260">
    <property type="entry name" value="PRK04223.1"/>
    <property type="match status" value="1"/>
</dbReference>
<dbReference type="NCBIfam" id="TIGR01038">
    <property type="entry name" value="uL22_arch_euk"/>
    <property type="match status" value="1"/>
</dbReference>
<dbReference type="PANTHER" id="PTHR11593">
    <property type="entry name" value="60S RIBOSOMAL PROTEIN L17"/>
    <property type="match status" value="1"/>
</dbReference>
<dbReference type="PANTHER" id="PTHR11593:SF10">
    <property type="entry name" value="60S RIBOSOMAL PROTEIN L17"/>
    <property type="match status" value="1"/>
</dbReference>
<dbReference type="Pfam" id="PF00237">
    <property type="entry name" value="Ribosomal_L22"/>
    <property type="match status" value="1"/>
</dbReference>
<dbReference type="SUPFAM" id="SSF54843">
    <property type="entry name" value="Ribosomal protein L22"/>
    <property type="match status" value="1"/>
</dbReference>
<name>RL22_PYRCJ</name>
<protein>
    <recommendedName>
        <fullName evidence="1">Large ribosomal subunit protein uL22</fullName>
    </recommendedName>
    <alternativeName>
        <fullName evidence="2">50S ribosomal protein L22</fullName>
    </alternativeName>
</protein>
<proteinExistence type="evidence at protein level"/>
<reference key="1">
    <citation type="submission" date="2007-02" db="EMBL/GenBank/DDBJ databases">
        <title>Complete sequence of Pyrobaculum calidifontis JCM 11548.</title>
        <authorList>
            <consortium name="US DOE Joint Genome Institute"/>
            <person name="Copeland A."/>
            <person name="Lucas S."/>
            <person name="Lapidus A."/>
            <person name="Barry K."/>
            <person name="Glavina del Rio T."/>
            <person name="Dalin E."/>
            <person name="Tice H."/>
            <person name="Pitluck S."/>
            <person name="Chain P."/>
            <person name="Malfatti S."/>
            <person name="Shin M."/>
            <person name="Vergez L."/>
            <person name="Schmutz J."/>
            <person name="Larimer F."/>
            <person name="Land M."/>
            <person name="Hauser L."/>
            <person name="Kyrpides N."/>
            <person name="Mikhailova N."/>
            <person name="Cozen A.E."/>
            <person name="Fitz-Gibbon S.T."/>
            <person name="House C.H."/>
            <person name="Saltikov C."/>
            <person name="Lowe T.M."/>
            <person name="Richardson P."/>
        </authorList>
    </citation>
    <scope>NUCLEOTIDE SEQUENCE [LARGE SCALE GENOMIC DNA]</scope>
    <source>
        <strain>DSM 21063 / JCM 11548 / VA1</strain>
    </source>
</reference>
<accession>A3MTL6</accession>
<feature type="chain" id="PRO_0000354547" description="Large ribosomal subunit protein uL22">
    <location>
        <begin position="1"/>
        <end position="184"/>
    </location>
</feature>
<keyword id="KW-0002">3D-structure</keyword>
<keyword id="KW-0687">Ribonucleoprotein</keyword>
<keyword id="KW-0689">Ribosomal protein</keyword>
<keyword id="KW-0694">RNA-binding</keyword>
<keyword id="KW-0699">rRNA-binding</keyword>
<gene>
    <name evidence="1" type="primary">rpl22</name>
    <name type="ordered locus">Pcal_0556</name>
</gene>